<accession>B0RMZ8</accession>
<proteinExistence type="inferred from homology"/>
<gene>
    <name evidence="1" type="primary">trpD</name>
    <name type="ordered locus">xcc-b100_0499</name>
</gene>
<evidence type="ECO:0000255" key="1">
    <source>
        <dbReference type="HAMAP-Rule" id="MF_00211"/>
    </source>
</evidence>
<keyword id="KW-0028">Amino-acid biosynthesis</keyword>
<keyword id="KW-0057">Aromatic amino acid biosynthesis</keyword>
<keyword id="KW-0328">Glycosyltransferase</keyword>
<keyword id="KW-0460">Magnesium</keyword>
<keyword id="KW-0479">Metal-binding</keyword>
<keyword id="KW-0808">Transferase</keyword>
<keyword id="KW-0822">Tryptophan biosynthesis</keyword>
<name>TRPD_XANCB</name>
<dbReference type="EC" id="2.4.2.18" evidence="1"/>
<dbReference type="EMBL" id="AM920689">
    <property type="protein sequence ID" value="CAP49833.1"/>
    <property type="molecule type" value="Genomic_DNA"/>
</dbReference>
<dbReference type="SMR" id="B0RMZ8"/>
<dbReference type="KEGG" id="xca:xcc-b100_0499"/>
<dbReference type="HOGENOM" id="CLU_034315_2_1_6"/>
<dbReference type="UniPathway" id="UPA00035">
    <property type="reaction ID" value="UER00041"/>
</dbReference>
<dbReference type="Proteomes" id="UP000001188">
    <property type="component" value="Chromosome"/>
</dbReference>
<dbReference type="GO" id="GO:0005829">
    <property type="term" value="C:cytosol"/>
    <property type="evidence" value="ECO:0007669"/>
    <property type="project" value="TreeGrafter"/>
</dbReference>
<dbReference type="GO" id="GO:0004048">
    <property type="term" value="F:anthranilate phosphoribosyltransferase activity"/>
    <property type="evidence" value="ECO:0007669"/>
    <property type="project" value="UniProtKB-UniRule"/>
</dbReference>
<dbReference type="GO" id="GO:0000287">
    <property type="term" value="F:magnesium ion binding"/>
    <property type="evidence" value="ECO:0007669"/>
    <property type="project" value="UniProtKB-UniRule"/>
</dbReference>
<dbReference type="GO" id="GO:0000162">
    <property type="term" value="P:L-tryptophan biosynthetic process"/>
    <property type="evidence" value="ECO:0007669"/>
    <property type="project" value="UniProtKB-UniRule"/>
</dbReference>
<dbReference type="FunFam" id="1.20.970.10:FF:000006">
    <property type="entry name" value="Anthranilate phosphoribosyltransferase"/>
    <property type="match status" value="1"/>
</dbReference>
<dbReference type="FunFam" id="3.40.1030.10:FF:000002">
    <property type="entry name" value="Anthranilate phosphoribosyltransferase"/>
    <property type="match status" value="1"/>
</dbReference>
<dbReference type="Gene3D" id="3.40.1030.10">
    <property type="entry name" value="Nucleoside phosphorylase/phosphoribosyltransferase catalytic domain"/>
    <property type="match status" value="1"/>
</dbReference>
<dbReference type="Gene3D" id="1.20.970.10">
    <property type="entry name" value="Transferase, Pyrimidine Nucleoside Phosphorylase, Chain C"/>
    <property type="match status" value="1"/>
</dbReference>
<dbReference type="HAMAP" id="MF_00211">
    <property type="entry name" value="TrpD"/>
    <property type="match status" value="1"/>
</dbReference>
<dbReference type="InterPro" id="IPR005940">
    <property type="entry name" value="Anthranilate_Pribosyl_Tfrase"/>
</dbReference>
<dbReference type="InterPro" id="IPR000312">
    <property type="entry name" value="Glycosyl_Trfase_fam3"/>
</dbReference>
<dbReference type="InterPro" id="IPR017459">
    <property type="entry name" value="Glycosyl_Trfase_fam3_N_dom"/>
</dbReference>
<dbReference type="InterPro" id="IPR036320">
    <property type="entry name" value="Glycosyl_Trfase_fam3_N_dom_sf"/>
</dbReference>
<dbReference type="InterPro" id="IPR035902">
    <property type="entry name" value="Nuc_phospho_transferase"/>
</dbReference>
<dbReference type="NCBIfam" id="TIGR01245">
    <property type="entry name" value="trpD"/>
    <property type="match status" value="1"/>
</dbReference>
<dbReference type="PANTHER" id="PTHR43285">
    <property type="entry name" value="ANTHRANILATE PHOSPHORIBOSYLTRANSFERASE"/>
    <property type="match status" value="1"/>
</dbReference>
<dbReference type="PANTHER" id="PTHR43285:SF2">
    <property type="entry name" value="ANTHRANILATE PHOSPHORIBOSYLTRANSFERASE"/>
    <property type="match status" value="1"/>
</dbReference>
<dbReference type="Pfam" id="PF02885">
    <property type="entry name" value="Glycos_trans_3N"/>
    <property type="match status" value="1"/>
</dbReference>
<dbReference type="Pfam" id="PF00591">
    <property type="entry name" value="Glycos_transf_3"/>
    <property type="match status" value="1"/>
</dbReference>
<dbReference type="SUPFAM" id="SSF52418">
    <property type="entry name" value="Nucleoside phosphorylase/phosphoribosyltransferase catalytic domain"/>
    <property type="match status" value="1"/>
</dbReference>
<dbReference type="SUPFAM" id="SSF47648">
    <property type="entry name" value="Nucleoside phosphorylase/phosphoribosyltransferase N-terminal domain"/>
    <property type="match status" value="1"/>
</dbReference>
<organism>
    <name type="scientific">Xanthomonas campestris pv. campestris (strain B100)</name>
    <dbReference type="NCBI Taxonomy" id="509169"/>
    <lineage>
        <taxon>Bacteria</taxon>
        <taxon>Pseudomonadati</taxon>
        <taxon>Pseudomonadota</taxon>
        <taxon>Gammaproteobacteria</taxon>
        <taxon>Lysobacterales</taxon>
        <taxon>Lysobacteraceae</taxon>
        <taxon>Xanthomonas</taxon>
    </lineage>
</organism>
<comment type="function">
    <text evidence="1">Catalyzes the transfer of the phosphoribosyl group of 5-phosphorylribose-1-pyrophosphate (PRPP) to anthranilate to yield N-(5'-phosphoribosyl)-anthranilate (PRA).</text>
</comment>
<comment type="catalytic activity">
    <reaction evidence="1">
        <text>N-(5-phospho-beta-D-ribosyl)anthranilate + diphosphate = 5-phospho-alpha-D-ribose 1-diphosphate + anthranilate</text>
        <dbReference type="Rhea" id="RHEA:11768"/>
        <dbReference type="ChEBI" id="CHEBI:16567"/>
        <dbReference type="ChEBI" id="CHEBI:18277"/>
        <dbReference type="ChEBI" id="CHEBI:33019"/>
        <dbReference type="ChEBI" id="CHEBI:58017"/>
        <dbReference type="EC" id="2.4.2.18"/>
    </reaction>
</comment>
<comment type="cofactor">
    <cofactor evidence="1">
        <name>Mg(2+)</name>
        <dbReference type="ChEBI" id="CHEBI:18420"/>
    </cofactor>
    <text evidence="1">Binds 2 magnesium ions per monomer.</text>
</comment>
<comment type="pathway">
    <text evidence="1">Amino-acid biosynthesis; L-tryptophan biosynthesis; L-tryptophan from chorismate: step 2/5.</text>
</comment>
<comment type="subunit">
    <text evidence="1">Homodimer.</text>
</comment>
<comment type="similarity">
    <text evidence="1">Belongs to the anthranilate phosphoribosyltransferase family.</text>
</comment>
<reference key="1">
    <citation type="journal article" date="2008" name="J. Biotechnol.">
        <title>The genome of Xanthomonas campestris pv. campestris B100 and its use for the reconstruction of metabolic pathways involved in xanthan biosynthesis.</title>
        <authorList>
            <person name="Vorhoelter F.-J."/>
            <person name="Schneiker S."/>
            <person name="Goesmann A."/>
            <person name="Krause L."/>
            <person name="Bekel T."/>
            <person name="Kaiser O."/>
            <person name="Linke B."/>
            <person name="Patschkowski T."/>
            <person name="Rueckert C."/>
            <person name="Schmid J."/>
            <person name="Sidhu V.K."/>
            <person name="Sieber V."/>
            <person name="Tauch A."/>
            <person name="Watt S.A."/>
            <person name="Weisshaar B."/>
            <person name="Becker A."/>
            <person name="Niehaus K."/>
            <person name="Puehler A."/>
        </authorList>
    </citation>
    <scope>NUCLEOTIDE SEQUENCE [LARGE SCALE GENOMIC DNA]</scope>
    <source>
        <strain>B100</strain>
    </source>
</reference>
<sequence>MPITPQQALQRTIEHREIFHDEMVDLMRQIMRGEVSDAMVSAILTGLRVKKETIGEIAGAATVMREFSRRVEVTDRCHMVDIVGTGGDGSHTFNISTCAMFVAAAGGAKVAKHGNRSVSSKSGSADALEALGAVIELQPEQVAASLAQTGIGFMYAPVHHPAMKVVAPVRREMGVRTIFNILGPLTNPACSPNILMGVFHPDLVGIQARVLQELGAERALVVWGRDGMDELSLGAGTLVGELRDGQVHEYEVHPEDFGIAMSASRNLKVADAAESRAMLLQVLDNVPGPALDIVALNAGAALYVAGVADSIADGIVRARQVLADGSARACLDAYVAFTQQATAQG</sequence>
<feature type="chain" id="PRO_1000099856" description="Anthranilate phosphoribosyltransferase">
    <location>
        <begin position="1"/>
        <end position="345"/>
    </location>
</feature>
<feature type="binding site" evidence="1">
    <location>
        <position position="84"/>
    </location>
    <ligand>
        <name>5-phospho-alpha-D-ribose 1-diphosphate</name>
        <dbReference type="ChEBI" id="CHEBI:58017"/>
    </ligand>
</feature>
<feature type="binding site" evidence="1">
    <location>
        <position position="84"/>
    </location>
    <ligand>
        <name>anthranilate</name>
        <dbReference type="ChEBI" id="CHEBI:16567"/>
        <label>1</label>
    </ligand>
</feature>
<feature type="binding site" evidence="1">
    <location>
        <begin position="87"/>
        <end position="88"/>
    </location>
    <ligand>
        <name>5-phospho-alpha-D-ribose 1-diphosphate</name>
        <dbReference type="ChEBI" id="CHEBI:58017"/>
    </ligand>
</feature>
<feature type="binding site" evidence="1">
    <location>
        <position position="92"/>
    </location>
    <ligand>
        <name>5-phospho-alpha-D-ribose 1-diphosphate</name>
        <dbReference type="ChEBI" id="CHEBI:58017"/>
    </ligand>
</feature>
<feature type="binding site" evidence="1">
    <location>
        <begin position="94"/>
        <end position="97"/>
    </location>
    <ligand>
        <name>5-phospho-alpha-D-ribose 1-diphosphate</name>
        <dbReference type="ChEBI" id="CHEBI:58017"/>
    </ligand>
</feature>
<feature type="binding site" evidence="1">
    <location>
        <position position="96"/>
    </location>
    <ligand>
        <name>Mg(2+)</name>
        <dbReference type="ChEBI" id="CHEBI:18420"/>
        <label>1</label>
    </ligand>
</feature>
<feature type="binding site" evidence="1">
    <location>
        <begin position="112"/>
        <end position="120"/>
    </location>
    <ligand>
        <name>5-phospho-alpha-D-ribose 1-diphosphate</name>
        <dbReference type="ChEBI" id="CHEBI:58017"/>
    </ligand>
</feature>
<feature type="binding site" evidence="1">
    <location>
        <position position="115"/>
    </location>
    <ligand>
        <name>anthranilate</name>
        <dbReference type="ChEBI" id="CHEBI:16567"/>
        <label>1</label>
    </ligand>
</feature>
<feature type="binding site" evidence="1">
    <location>
        <position position="124"/>
    </location>
    <ligand>
        <name>5-phospho-alpha-D-ribose 1-diphosphate</name>
        <dbReference type="ChEBI" id="CHEBI:58017"/>
    </ligand>
</feature>
<feature type="binding site" evidence="1">
    <location>
        <position position="170"/>
    </location>
    <ligand>
        <name>anthranilate</name>
        <dbReference type="ChEBI" id="CHEBI:16567"/>
        <label>2</label>
    </ligand>
</feature>
<feature type="binding site" evidence="1">
    <location>
        <position position="229"/>
    </location>
    <ligand>
        <name>Mg(2+)</name>
        <dbReference type="ChEBI" id="CHEBI:18420"/>
        <label>2</label>
    </ligand>
</feature>
<feature type="binding site" evidence="1">
    <location>
        <position position="230"/>
    </location>
    <ligand>
        <name>Mg(2+)</name>
        <dbReference type="ChEBI" id="CHEBI:18420"/>
        <label>1</label>
    </ligand>
</feature>
<feature type="binding site" evidence="1">
    <location>
        <position position="230"/>
    </location>
    <ligand>
        <name>Mg(2+)</name>
        <dbReference type="ChEBI" id="CHEBI:18420"/>
        <label>2</label>
    </ligand>
</feature>
<protein>
    <recommendedName>
        <fullName evidence="1">Anthranilate phosphoribosyltransferase</fullName>
        <ecNumber evidence="1">2.4.2.18</ecNumber>
    </recommendedName>
</protein>